<feature type="chain" id="PRO_0000378042" description="B3 domain-containing protein Os01g0723500">
    <location>
        <begin position="1"/>
        <end position="402"/>
    </location>
</feature>
<feature type="DNA-binding region" description="TF-B3 1" evidence="1">
    <location>
        <begin position="18"/>
        <end position="121"/>
    </location>
</feature>
<feature type="DNA-binding region" description="TF-B3 2" evidence="1">
    <location>
        <begin position="289"/>
        <end position="381"/>
    </location>
</feature>
<feature type="region of interest" description="Disordered" evidence="2">
    <location>
        <begin position="126"/>
        <end position="203"/>
    </location>
</feature>
<feature type="compositionally biased region" description="Basic and acidic residues" evidence="2">
    <location>
        <begin position="152"/>
        <end position="162"/>
    </location>
</feature>
<feature type="compositionally biased region" description="Polar residues" evidence="2">
    <location>
        <begin position="173"/>
        <end position="186"/>
    </location>
</feature>
<reference key="1">
    <citation type="journal article" date="2002" name="Nature">
        <title>The genome sequence and structure of rice chromosome 1.</title>
        <authorList>
            <person name="Sasaki T."/>
            <person name="Matsumoto T."/>
            <person name="Yamamoto K."/>
            <person name="Sakata K."/>
            <person name="Baba T."/>
            <person name="Katayose Y."/>
            <person name="Wu J."/>
            <person name="Niimura Y."/>
            <person name="Cheng Z."/>
            <person name="Nagamura Y."/>
            <person name="Antonio B.A."/>
            <person name="Kanamori H."/>
            <person name="Hosokawa S."/>
            <person name="Masukawa M."/>
            <person name="Arikawa K."/>
            <person name="Chiden Y."/>
            <person name="Hayashi M."/>
            <person name="Okamoto M."/>
            <person name="Ando T."/>
            <person name="Aoki H."/>
            <person name="Arita K."/>
            <person name="Hamada M."/>
            <person name="Harada C."/>
            <person name="Hijishita S."/>
            <person name="Honda M."/>
            <person name="Ichikawa Y."/>
            <person name="Idonuma A."/>
            <person name="Iijima M."/>
            <person name="Ikeda M."/>
            <person name="Ikeno M."/>
            <person name="Ito S."/>
            <person name="Ito T."/>
            <person name="Ito Y."/>
            <person name="Ito Y."/>
            <person name="Iwabuchi A."/>
            <person name="Kamiya K."/>
            <person name="Karasawa W."/>
            <person name="Katagiri S."/>
            <person name="Kikuta A."/>
            <person name="Kobayashi N."/>
            <person name="Kono I."/>
            <person name="Machita K."/>
            <person name="Maehara T."/>
            <person name="Mizuno H."/>
            <person name="Mizubayashi T."/>
            <person name="Mukai Y."/>
            <person name="Nagasaki H."/>
            <person name="Nakashima M."/>
            <person name="Nakama Y."/>
            <person name="Nakamichi Y."/>
            <person name="Nakamura M."/>
            <person name="Namiki N."/>
            <person name="Negishi M."/>
            <person name="Ohta I."/>
            <person name="Ono N."/>
            <person name="Saji S."/>
            <person name="Sakai K."/>
            <person name="Shibata M."/>
            <person name="Shimokawa T."/>
            <person name="Shomura A."/>
            <person name="Song J."/>
            <person name="Takazaki Y."/>
            <person name="Terasawa K."/>
            <person name="Tsuji K."/>
            <person name="Waki K."/>
            <person name="Yamagata H."/>
            <person name="Yamane H."/>
            <person name="Yoshiki S."/>
            <person name="Yoshihara R."/>
            <person name="Yukawa K."/>
            <person name="Zhong H."/>
            <person name="Iwama H."/>
            <person name="Endo T."/>
            <person name="Ito H."/>
            <person name="Hahn J.H."/>
            <person name="Kim H.-I."/>
            <person name="Eun M.-Y."/>
            <person name="Yano M."/>
            <person name="Jiang J."/>
            <person name="Gojobori T."/>
        </authorList>
    </citation>
    <scope>NUCLEOTIDE SEQUENCE [LARGE SCALE GENOMIC DNA]</scope>
    <source>
        <strain>cv. Nipponbare</strain>
    </source>
</reference>
<reference key="2">
    <citation type="journal article" date="2005" name="Nature">
        <title>The map-based sequence of the rice genome.</title>
        <authorList>
            <consortium name="International rice genome sequencing project (IRGSP)"/>
        </authorList>
    </citation>
    <scope>NUCLEOTIDE SEQUENCE [LARGE SCALE GENOMIC DNA]</scope>
    <source>
        <strain>cv. Nipponbare</strain>
    </source>
</reference>
<reference key="3">
    <citation type="journal article" date="2008" name="Nucleic Acids Res.">
        <title>The rice annotation project database (RAP-DB): 2008 update.</title>
        <authorList>
            <consortium name="The rice annotation project (RAP)"/>
        </authorList>
    </citation>
    <scope>GENOME REANNOTATION</scope>
    <source>
        <strain>cv. Nipponbare</strain>
    </source>
</reference>
<reference key="4">
    <citation type="journal article" date="2013" name="Rice">
        <title>Improvement of the Oryza sativa Nipponbare reference genome using next generation sequence and optical map data.</title>
        <authorList>
            <person name="Kawahara Y."/>
            <person name="de la Bastide M."/>
            <person name="Hamilton J.P."/>
            <person name="Kanamori H."/>
            <person name="McCombie W.R."/>
            <person name="Ouyang S."/>
            <person name="Schwartz D.C."/>
            <person name="Tanaka T."/>
            <person name="Wu J."/>
            <person name="Zhou S."/>
            <person name="Childs K.L."/>
            <person name="Davidson R.M."/>
            <person name="Lin H."/>
            <person name="Quesada-Ocampo L."/>
            <person name="Vaillancourt B."/>
            <person name="Sakai H."/>
            <person name="Lee S.S."/>
            <person name="Kim J."/>
            <person name="Numa H."/>
            <person name="Itoh T."/>
            <person name="Buell C.R."/>
            <person name="Matsumoto T."/>
        </authorList>
    </citation>
    <scope>GENOME REANNOTATION</scope>
    <source>
        <strain>cv. Nipponbare</strain>
    </source>
</reference>
<organism>
    <name type="scientific">Oryza sativa subsp. japonica</name>
    <name type="common">Rice</name>
    <dbReference type="NCBI Taxonomy" id="39947"/>
    <lineage>
        <taxon>Eukaryota</taxon>
        <taxon>Viridiplantae</taxon>
        <taxon>Streptophyta</taxon>
        <taxon>Embryophyta</taxon>
        <taxon>Tracheophyta</taxon>
        <taxon>Spermatophyta</taxon>
        <taxon>Magnoliopsida</taxon>
        <taxon>Liliopsida</taxon>
        <taxon>Poales</taxon>
        <taxon>Poaceae</taxon>
        <taxon>BOP clade</taxon>
        <taxon>Oryzoideae</taxon>
        <taxon>Oryzeae</taxon>
        <taxon>Oryzinae</taxon>
        <taxon>Oryza</taxon>
        <taxon>Oryza sativa</taxon>
    </lineage>
</organism>
<proteinExistence type="inferred from homology"/>
<evidence type="ECO:0000255" key="1">
    <source>
        <dbReference type="PROSITE-ProRule" id="PRU00326"/>
    </source>
</evidence>
<evidence type="ECO:0000256" key="2">
    <source>
        <dbReference type="SAM" id="MobiDB-lite"/>
    </source>
</evidence>
<keyword id="KW-0238">DNA-binding</keyword>
<keyword id="KW-0539">Nucleus</keyword>
<keyword id="KW-1185">Reference proteome</keyword>
<keyword id="KW-0677">Repeat</keyword>
<keyword id="KW-0804">Transcription</keyword>
<keyword id="KW-0805">Transcription regulation</keyword>
<dbReference type="EMBL" id="AP003229">
    <property type="protein sequence ID" value="BAB89497.1"/>
    <property type="molecule type" value="Genomic_DNA"/>
</dbReference>
<dbReference type="EMBL" id="AP008207">
    <property type="protein sequence ID" value="BAH91276.1"/>
    <property type="molecule type" value="Genomic_DNA"/>
</dbReference>
<dbReference type="EMBL" id="AP014957">
    <property type="protein sequence ID" value="BAS74110.1"/>
    <property type="molecule type" value="Genomic_DNA"/>
</dbReference>
<dbReference type="SMR" id="Q8S2E6"/>
<dbReference type="FunCoup" id="Q8S2E6">
    <property type="interactions" value="103"/>
</dbReference>
<dbReference type="STRING" id="39947.Q8S2E6"/>
<dbReference type="PaxDb" id="39947-Q8S2E6"/>
<dbReference type="EnsemblPlants" id="Os01t0723500-00">
    <property type="protein sequence ID" value="Os01t0723500-00"/>
    <property type="gene ID" value="Os01g0723500"/>
</dbReference>
<dbReference type="Gramene" id="Os01t0723500-00">
    <property type="protein sequence ID" value="Os01t0723500-00"/>
    <property type="gene ID" value="Os01g0723500"/>
</dbReference>
<dbReference type="KEGG" id="dosa:Os01g0723500"/>
<dbReference type="KEGG" id="osa:9268171"/>
<dbReference type="eggNOG" id="ENOG502RZR8">
    <property type="taxonomic scope" value="Eukaryota"/>
</dbReference>
<dbReference type="HOGENOM" id="CLU_015069_1_1_1"/>
<dbReference type="InParanoid" id="Q8S2E6"/>
<dbReference type="OMA" id="ARACQRD"/>
<dbReference type="OrthoDB" id="1666376at2759"/>
<dbReference type="Proteomes" id="UP000000763">
    <property type="component" value="Chromosome 1"/>
</dbReference>
<dbReference type="Proteomes" id="UP000059680">
    <property type="component" value="Chromosome 1"/>
</dbReference>
<dbReference type="GO" id="GO:0005634">
    <property type="term" value="C:nucleus"/>
    <property type="evidence" value="ECO:0007669"/>
    <property type="project" value="UniProtKB-SubCell"/>
</dbReference>
<dbReference type="GO" id="GO:0003677">
    <property type="term" value="F:DNA binding"/>
    <property type="evidence" value="ECO:0007669"/>
    <property type="project" value="UniProtKB-KW"/>
</dbReference>
<dbReference type="CDD" id="cd10017">
    <property type="entry name" value="B3_DNA"/>
    <property type="match status" value="2"/>
</dbReference>
<dbReference type="Gene3D" id="2.40.330.10">
    <property type="entry name" value="DNA-binding pseudobarrel domain"/>
    <property type="match status" value="2"/>
</dbReference>
<dbReference type="InterPro" id="IPR003340">
    <property type="entry name" value="B3_DNA-bd"/>
</dbReference>
<dbReference type="InterPro" id="IPR015300">
    <property type="entry name" value="DNA-bd_pseudobarrel_sf"/>
</dbReference>
<dbReference type="InterPro" id="IPR044837">
    <property type="entry name" value="REM16-like"/>
</dbReference>
<dbReference type="PANTHER" id="PTHR31391:SF106">
    <property type="entry name" value="B3 DOMAIN-CONTAINING PROTEIN OS01G0723500"/>
    <property type="match status" value="1"/>
</dbReference>
<dbReference type="PANTHER" id="PTHR31391">
    <property type="entry name" value="B3 DOMAIN-CONTAINING PROTEIN OS11G0197600-RELATED"/>
    <property type="match status" value="1"/>
</dbReference>
<dbReference type="Pfam" id="PF02362">
    <property type="entry name" value="B3"/>
    <property type="match status" value="2"/>
</dbReference>
<dbReference type="SMART" id="SM01019">
    <property type="entry name" value="B3"/>
    <property type="match status" value="2"/>
</dbReference>
<dbReference type="SUPFAM" id="SSF101936">
    <property type="entry name" value="DNA-binding pseudobarrel domain"/>
    <property type="match status" value="2"/>
</dbReference>
<dbReference type="PROSITE" id="PS50863">
    <property type="entry name" value="B3"/>
    <property type="match status" value="2"/>
</dbReference>
<gene>
    <name type="ordered locus">Os01g0723500</name>
    <name type="ordered locus">LOC_Os01g52514</name>
    <name type="ORF">P0022F10.16</name>
</gene>
<accession>Q8S2E6</accession>
<accession>C7IXR6</accession>
<protein>
    <recommendedName>
        <fullName>B3 domain-containing protein Os01g0723500</fullName>
    </recommendedName>
</protein>
<comment type="subcellular location">
    <subcellularLocation>
        <location evidence="1">Nucleus</location>
    </subcellularLocation>
</comment>
<sequence>MPGAGGKKKSPWASGERRPHFFKVLVGDFKQRLKIPPNFCKHIPWEESRKAKGLKEASMAATLEGPSGRTWLVVIRRTAEGTFFTSGWPKFVQDQALRELEFVVFRYDGNTRFTAMVFDRTACEREDLMGGGGGDRPRKKRGRPRTAAASRDAARPKKDSVGKEMVTYRASPSGGQPLQIVDSSWTPEPGSTAVKNEEDADELPVCELPASSASPPRHVPEGALDADGGAARRGAAKTRSLQDDLALASIPPSIRRYKGYVSRRRAVATAERQRATEIAHAFRSPLPYCVIRMSTMHVYYSFMMRFPTGFSRQHLPRERTDVVLRDPGGKVWSVLYIPNTRDRLSRGWCAFARGNCLEEGDYCVFELVAAAEFRVHIFRVVEPAVPAVRLRRVTVTCGRGPT</sequence>
<name>Y1235_ORYSJ</name>